<proteinExistence type="evidence at transcript level"/>
<gene>
    <name type="primary">nrdJ</name>
    <name type="ordered locus">SCO5805</name>
    <name type="ORF">SC4H2.26</name>
</gene>
<sequence length="967" mass="105285">MTETASGPARSSRAKGTKAGKGLRVERVHTTPGVHPYDEVAWERRDVVMTNWRDGSVNFEQRGVEFPEFWSVNAVNIVTSKYFRGAVGTPQREVSLKQLIDRIVKTYRKAGEDNKYFASPADAEIFEHELAYALLHQIFSFNSPVWFNVGTPQPQQVSACFILSVDDSMESILDWYKEEGMIFKGGSGAGLNLSRIRSSKELLSSGGNASGPVSFMRGADASAGTIKSGGATRRAAKMVILDVDHPDIEDFIQTKVKEEEKIRALRDAGFDMDLGGDDITSVQYQNANNSVRVNDTFMKAVQDGGKFGLTSRMTGEVIEEVDAKALFRKMAEAAWACADPGIQYDDTINAWHTCPESGRINGSNPCSEYMHLDNTSCNLASLNLMKFLKDDGKGNQSFDAERFSKVVELVITAMDISICFADFPTQKIGENTRAFRQLGIGYANLGALLMATGHAYDSDGGRALAGAITSLMTGTSYRRSAELAAIVGPYDGYARNAKPHLRVMKQHSDENAKAVRMDDLDTPIWAAATEAWQDVLRLGEKNGFRNSQASVIAPTGTIGLAMSCDTTGLEPDLALVKFKKLVGGGSMQIVNGTVPQALRRLGYQEEQIEAIVAHIAENGNVIDAPGLKPEHYEVFDCAMGERSISAMGHVRMMAAIQPWISGALSKTVNLPESATVEDVEEVYFEAWKMGVKALAIYRDNCKVGQPLSAKTKTVKDTEKAEITEKTEAAIRETVEKVVEYRPVRKRLPKGRPGITTSFTVGGAEGYMTANSYPDDGLGEVFLKMSKQGSTLAGMMDAFSIAVSVGLQYGVPLETYVSKFTNMRFEPAGMTDDPDVRMAQSIVDYIFRRLALDFLPFETRSALGIHSAEERQRHLETGSYEPSDDELDVEGLAQSAPRAQELVAVATPKAEAEAAKPAPQQAHTSAELVEMQLGIQADAPLCFSCGTKMQRAGSCYICEGCGSTSGCS</sequence>
<name>NRDJ_STRCO</name>
<reference key="1">
    <citation type="journal article" date="2002" name="Nature">
        <title>Complete genome sequence of the model actinomycete Streptomyces coelicolor A3(2).</title>
        <authorList>
            <person name="Bentley S.D."/>
            <person name="Chater K.F."/>
            <person name="Cerdeno-Tarraga A.-M."/>
            <person name="Challis G.L."/>
            <person name="Thomson N.R."/>
            <person name="James K.D."/>
            <person name="Harris D.E."/>
            <person name="Quail M.A."/>
            <person name="Kieser H."/>
            <person name="Harper D."/>
            <person name="Bateman A."/>
            <person name="Brown S."/>
            <person name="Chandra G."/>
            <person name="Chen C.W."/>
            <person name="Collins M."/>
            <person name="Cronin A."/>
            <person name="Fraser A."/>
            <person name="Goble A."/>
            <person name="Hidalgo J."/>
            <person name="Hornsby T."/>
            <person name="Howarth S."/>
            <person name="Huang C.-H."/>
            <person name="Kieser T."/>
            <person name="Larke L."/>
            <person name="Murphy L.D."/>
            <person name="Oliver K."/>
            <person name="O'Neil S."/>
            <person name="Rabbinowitsch E."/>
            <person name="Rajandream M.A."/>
            <person name="Rutherford K.M."/>
            <person name="Rutter S."/>
            <person name="Seeger K."/>
            <person name="Saunders D."/>
            <person name="Sharp S."/>
            <person name="Squares R."/>
            <person name="Squares S."/>
            <person name="Taylor K."/>
            <person name="Warren T."/>
            <person name="Wietzorrek A."/>
            <person name="Woodward J.R."/>
            <person name="Barrell B.G."/>
            <person name="Parkhill J."/>
            <person name="Hopwood D.A."/>
        </authorList>
    </citation>
    <scope>NUCLEOTIDE SEQUENCE [LARGE SCALE GENOMIC DNA]</scope>
    <source>
        <strain>ATCC BAA-471 / A3(2) / M145</strain>
    </source>
</reference>
<reference key="2">
    <citation type="journal article" date="2002" name="Microbiology">
        <title>Streptomyces spp. contain class Ia and class II ribonucleotide reductases: expression analysis of the genes in vegetative growth.</title>
        <authorList>
            <person name="Borovok I."/>
            <person name="Kreisberg-Zakarin R."/>
            <person name="Yanko M."/>
            <person name="Schreiber R."/>
            <person name="Myslovati M."/>
            <person name="Aaslund F."/>
            <person name="Holmgren A."/>
            <person name="Cohen G."/>
            <person name="Aharonowitz Y."/>
        </authorList>
    </citation>
    <scope>NUCLEOTIDE SEQUENCE [GENOMIC DNA]</scope>
    <source>
        <strain>ATCC BAA-471 / A3(2) / M145</strain>
    </source>
</reference>
<reference key="3">
    <citation type="journal article" date="2004" name="Mol. Microbiol.">
        <title>Alternative oxygen-dependent and oxygen-independent ribonucleotide reductases in Streptomyces: cross-regulation and physiological role in response to oxygen limitation.</title>
        <authorList>
            <person name="Borovok I."/>
            <person name="Gorovitz B."/>
            <person name="Yanku M."/>
            <person name="Schreiber R."/>
            <person name="Gust B."/>
            <person name="Chater K."/>
            <person name="Aharonowitz Y."/>
            <person name="Cohen G."/>
        </authorList>
    </citation>
    <scope>NUCLEOTIDE SEQUENCE [GENOMIC DNA]</scope>
    <scope>REGULATION</scope>
    <source>
        <strain>ATCC BAA-471 / A3(2) / M145</strain>
    </source>
</reference>
<keyword id="KW-0846">Cobalamin</keyword>
<keyword id="KW-0170">Cobalt</keyword>
<keyword id="KW-1015">Disulfide bond</keyword>
<keyword id="KW-0237">DNA synthesis</keyword>
<keyword id="KW-0547">Nucleotide-binding</keyword>
<keyword id="KW-0560">Oxidoreductase</keyword>
<keyword id="KW-1185">Reference proteome</keyword>
<protein>
    <recommendedName>
        <fullName>Vitamin B12-dependent ribonucleotide reductase</fullName>
        <ecNumber>1.17.4.1</ecNumber>
    </recommendedName>
    <alternativeName>
        <fullName>Ribonucleoside-diphosphate reductase NrdJ</fullName>
    </alternativeName>
</protein>
<comment type="function">
    <text>Catalyzes the reduction of ribonucleotides to deoxyribonucleotides. May function to provide a pool of deoxyribonucleotide precursors for DNA repair during oxygen limitation and/or for immediate growth after restoration of oxygen.</text>
</comment>
<comment type="catalytic activity">
    <reaction>
        <text>a 2'-deoxyribonucleoside 5'-diphosphate + [thioredoxin]-disulfide + H2O = a ribonucleoside 5'-diphosphate + [thioredoxin]-dithiol</text>
        <dbReference type="Rhea" id="RHEA:23252"/>
        <dbReference type="Rhea" id="RHEA-COMP:10698"/>
        <dbReference type="Rhea" id="RHEA-COMP:10700"/>
        <dbReference type="ChEBI" id="CHEBI:15377"/>
        <dbReference type="ChEBI" id="CHEBI:29950"/>
        <dbReference type="ChEBI" id="CHEBI:50058"/>
        <dbReference type="ChEBI" id="CHEBI:57930"/>
        <dbReference type="ChEBI" id="CHEBI:73316"/>
        <dbReference type="EC" id="1.17.4.1"/>
    </reaction>
</comment>
<comment type="cofactor">
    <cofactor evidence="3">
        <name>adenosylcob(III)alamin</name>
        <dbReference type="ChEBI" id="CHEBI:18408"/>
    </cofactor>
    <text evidence="3">5'-deoxyadenosylcobalamine (coenzyme B12).</text>
</comment>
<comment type="developmental stage">
    <text>Expressed during the exponential phase of growth.</text>
</comment>
<comment type="induction">
    <text>Induced by NrdR.</text>
</comment>
<comment type="miscellaneous">
    <text>Can grow normally using either of its two RNR systems.</text>
</comment>
<comment type="similarity">
    <text evidence="3">Belongs to the ribonucleoside diphosphate reductase class-2 family.</text>
</comment>
<feature type="chain" id="PRO_0000229029" description="Vitamin B12-dependent ribonucleotide reductase">
    <location>
        <begin position="1"/>
        <end position="967"/>
    </location>
</feature>
<feature type="region of interest" description="Disordered" evidence="2">
    <location>
        <begin position="1"/>
        <end position="23"/>
    </location>
</feature>
<feature type="active site" description="Proton acceptor" evidence="1">
    <location>
        <position position="364"/>
    </location>
</feature>
<feature type="active site" description="Cysteine radical intermediate" evidence="1">
    <location>
        <position position="366"/>
    </location>
</feature>
<feature type="active site" description="Proton acceptor" evidence="1">
    <location>
        <position position="368"/>
    </location>
</feature>
<feature type="binding site" evidence="1">
    <location>
        <position position="143"/>
    </location>
    <ligand>
        <name>substrate</name>
    </ligand>
</feature>
<feature type="binding site" evidence="1">
    <location>
        <begin position="159"/>
        <end position="160"/>
    </location>
    <ligand>
        <name>substrate</name>
    </ligand>
</feature>
<feature type="binding site" evidence="1">
    <location>
        <position position="188"/>
    </location>
    <ligand>
        <name>substrate</name>
    </ligand>
</feature>
<feature type="binding site" evidence="1">
    <location>
        <begin position="364"/>
        <end position="368"/>
    </location>
    <ligand>
        <name>substrate</name>
    </ligand>
</feature>
<feature type="binding site" evidence="1">
    <location>
        <begin position="554"/>
        <end position="558"/>
    </location>
    <ligand>
        <name>substrate</name>
    </ligand>
</feature>
<feature type="disulfide bond" description="Redox-active" evidence="1">
    <location>
        <begin position="160"/>
        <end position="377"/>
    </location>
</feature>
<accession>O69981</accession>
<organism>
    <name type="scientific">Streptomyces coelicolor (strain ATCC BAA-471 / A3(2) / M145)</name>
    <dbReference type="NCBI Taxonomy" id="100226"/>
    <lineage>
        <taxon>Bacteria</taxon>
        <taxon>Bacillati</taxon>
        <taxon>Actinomycetota</taxon>
        <taxon>Actinomycetes</taxon>
        <taxon>Kitasatosporales</taxon>
        <taxon>Streptomycetaceae</taxon>
        <taxon>Streptomyces</taxon>
        <taxon>Streptomyces albidoflavus group</taxon>
    </lineage>
</organism>
<dbReference type="EC" id="1.17.4.1"/>
<dbReference type="EMBL" id="AL939125">
    <property type="protein sequence ID" value="CAA18341.1"/>
    <property type="molecule type" value="Genomic_DNA"/>
</dbReference>
<dbReference type="EMBL" id="AM039891">
    <property type="protein sequence ID" value="CAJ01782.1"/>
    <property type="molecule type" value="Genomic_RNA"/>
</dbReference>
<dbReference type="PIR" id="T35125">
    <property type="entry name" value="T35125"/>
</dbReference>
<dbReference type="RefSeq" id="NP_629929.1">
    <property type="nucleotide sequence ID" value="NC_003888.3"/>
</dbReference>
<dbReference type="RefSeq" id="WP_011030467.1">
    <property type="nucleotide sequence ID" value="NZ_VNID01000007.1"/>
</dbReference>
<dbReference type="SMR" id="O69981"/>
<dbReference type="FunCoup" id="O69981">
    <property type="interactions" value="248"/>
</dbReference>
<dbReference type="STRING" id="100226.gene:17763465"/>
<dbReference type="PaxDb" id="100226-SCO5805"/>
<dbReference type="KEGG" id="sco:SCO5805"/>
<dbReference type="PATRIC" id="fig|100226.15.peg.5897"/>
<dbReference type="eggNOG" id="COG0209">
    <property type="taxonomic scope" value="Bacteria"/>
</dbReference>
<dbReference type="HOGENOM" id="CLU_000404_0_1_11"/>
<dbReference type="InParanoid" id="O69981"/>
<dbReference type="OrthoDB" id="9762933at2"/>
<dbReference type="PhylomeDB" id="O69981"/>
<dbReference type="Proteomes" id="UP000001973">
    <property type="component" value="Chromosome"/>
</dbReference>
<dbReference type="GO" id="GO:0031419">
    <property type="term" value="F:cobalamin binding"/>
    <property type="evidence" value="ECO:0007669"/>
    <property type="project" value="UniProtKB-KW"/>
</dbReference>
<dbReference type="GO" id="GO:0050897">
    <property type="term" value="F:cobalt ion binding"/>
    <property type="evidence" value="ECO:0007669"/>
    <property type="project" value="InterPro"/>
</dbReference>
<dbReference type="GO" id="GO:0000166">
    <property type="term" value="F:nucleotide binding"/>
    <property type="evidence" value="ECO:0007669"/>
    <property type="project" value="UniProtKB-KW"/>
</dbReference>
<dbReference type="GO" id="GO:0004748">
    <property type="term" value="F:ribonucleoside-diphosphate reductase activity, thioredoxin disulfide as acceptor"/>
    <property type="evidence" value="ECO:0000318"/>
    <property type="project" value="GO_Central"/>
</dbReference>
<dbReference type="GO" id="GO:0071897">
    <property type="term" value="P:DNA biosynthetic process"/>
    <property type="evidence" value="ECO:0007669"/>
    <property type="project" value="UniProtKB-KW"/>
</dbReference>
<dbReference type="CDD" id="cd02888">
    <property type="entry name" value="RNR_II_dimer"/>
    <property type="match status" value="1"/>
</dbReference>
<dbReference type="FunFam" id="3.20.70.20:FF:000007">
    <property type="entry name" value="Vitamin B12-dependent ribonucleotide reductase"/>
    <property type="match status" value="1"/>
</dbReference>
<dbReference type="Gene3D" id="3.20.70.20">
    <property type="match status" value="1"/>
</dbReference>
<dbReference type="InterPro" id="IPR050862">
    <property type="entry name" value="RdRp_reductase_class-2"/>
</dbReference>
<dbReference type="InterPro" id="IPR013678">
    <property type="entry name" value="RNR_2_N"/>
</dbReference>
<dbReference type="InterPro" id="IPR000788">
    <property type="entry name" value="RNR_lg_C"/>
</dbReference>
<dbReference type="InterPro" id="IPR013344">
    <property type="entry name" value="RNR_NrdJ/NrdZ"/>
</dbReference>
<dbReference type="InterPro" id="IPR024434">
    <property type="entry name" value="TSCPD_dom"/>
</dbReference>
<dbReference type="NCBIfam" id="TIGR02504">
    <property type="entry name" value="NrdJ_Z"/>
    <property type="match status" value="1"/>
</dbReference>
<dbReference type="NCBIfam" id="NF005122">
    <property type="entry name" value="PRK06556.1"/>
    <property type="match status" value="1"/>
</dbReference>
<dbReference type="PANTHER" id="PTHR43371:SF1">
    <property type="entry name" value="RIBONUCLEOSIDE-DIPHOSPHATE REDUCTASE"/>
    <property type="match status" value="1"/>
</dbReference>
<dbReference type="PANTHER" id="PTHR43371">
    <property type="entry name" value="VITAMIN B12-DEPENDENT RIBONUCLEOTIDE REDUCTASE"/>
    <property type="match status" value="1"/>
</dbReference>
<dbReference type="Pfam" id="PF08471">
    <property type="entry name" value="Ribonuc_red_2_N"/>
    <property type="match status" value="1"/>
</dbReference>
<dbReference type="Pfam" id="PF02867">
    <property type="entry name" value="Ribonuc_red_lgC"/>
    <property type="match status" value="1"/>
</dbReference>
<dbReference type="Pfam" id="PF12637">
    <property type="entry name" value="TSCPD"/>
    <property type="match status" value="1"/>
</dbReference>
<dbReference type="PRINTS" id="PR01183">
    <property type="entry name" value="RIBORDTASEM1"/>
</dbReference>
<dbReference type="SUPFAM" id="SSF51998">
    <property type="entry name" value="PFL-like glycyl radical enzymes"/>
    <property type="match status" value="1"/>
</dbReference>
<evidence type="ECO:0000250" key="1"/>
<evidence type="ECO:0000256" key="2">
    <source>
        <dbReference type="SAM" id="MobiDB-lite"/>
    </source>
</evidence>
<evidence type="ECO:0000305" key="3"/>